<accession>Q72BR0</accession>
<reference key="1">
    <citation type="journal article" date="2004" name="Nat. Biotechnol.">
        <title>The genome sequence of the anaerobic, sulfate-reducing bacterium Desulfovibrio vulgaris Hildenborough.</title>
        <authorList>
            <person name="Heidelberg J.F."/>
            <person name="Seshadri R."/>
            <person name="Haveman S.A."/>
            <person name="Hemme C.L."/>
            <person name="Paulsen I.T."/>
            <person name="Kolonay J.F."/>
            <person name="Eisen J.A."/>
            <person name="Ward N.L."/>
            <person name="Methe B.A."/>
            <person name="Brinkac L.M."/>
            <person name="Daugherty S.C."/>
            <person name="DeBoy R.T."/>
            <person name="Dodson R.J."/>
            <person name="Durkin A.S."/>
            <person name="Madupu R."/>
            <person name="Nelson W.C."/>
            <person name="Sullivan S.A."/>
            <person name="Fouts D.E."/>
            <person name="Haft D.H."/>
            <person name="Selengut J."/>
            <person name="Peterson J.D."/>
            <person name="Davidsen T.M."/>
            <person name="Zafar N."/>
            <person name="Zhou L."/>
            <person name="Radune D."/>
            <person name="Dimitrov G."/>
            <person name="Hance M."/>
            <person name="Tran K."/>
            <person name="Khouri H.M."/>
            <person name="Gill J."/>
            <person name="Utterback T.R."/>
            <person name="Feldblyum T.V."/>
            <person name="Wall J.D."/>
            <person name="Voordouw G."/>
            <person name="Fraser C.M."/>
        </authorList>
    </citation>
    <scope>NUCLEOTIDE SEQUENCE [LARGE SCALE GENOMIC DNA]</scope>
    <source>
        <strain>ATCC 29579 / DSM 644 / CCUG 34227 / NCIMB 8303 / VKM B-1760 / Hildenborough</strain>
    </source>
</reference>
<gene>
    <name evidence="1" type="primary">rplY</name>
    <name evidence="1" type="synonym">ctc</name>
    <name type="ordered locus">DVU_1574</name>
</gene>
<protein>
    <recommendedName>
        <fullName evidence="1">Large ribosomal subunit protein bL25</fullName>
    </recommendedName>
    <alternativeName>
        <fullName evidence="3">50S ribosomal protein L25</fullName>
    </alternativeName>
    <alternativeName>
        <fullName evidence="1">General stress protein CTC</fullName>
    </alternativeName>
</protein>
<name>RL25_NITV2</name>
<keyword id="KW-1185">Reference proteome</keyword>
<keyword id="KW-0687">Ribonucleoprotein</keyword>
<keyword id="KW-0689">Ribosomal protein</keyword>
<keyword id="KW-0694">RNA-binding</keyword>
<keyword id="KW-0699">rRNA-binding</keyword>
<evidence type="ECO:0000255" key="1">
    <source>
        <dbReference type="HAMAP-Rule" id="MF_01334"/>
    </source>
</evidence>
<evidence type="ECO:0000256" key="2">
    <source>
        <dbReference type="SAM" id="MobiDB-lite"/>
    </source>
</evidence>
<evidence type="ECO:0000305" key="3"/>
<proteinExistence type="inferred from homology"/>
<organism>
    <name type="scientific">Nitratidesulfovibrio vulgaris (strain ATCC 29579 / DSM 644 / CCUG 34227 / NCIMB 8303 / VKM B-1760 / Hildenborough)</name>
    <name type="common">Desulfovibrio vulgaris</name>
    <dbReference type="NCBI Taxonomy" id="882"/>
    <lineage>
        <taxon>Bacteria</taxon>
        <taxon>Pseudomonadati</taxon>
        <taxon>Thermodesulfobacteriota</taxon>
        <taxon>Desulfovibrionia</taxon>
        <taxon>Desulfovibrionales</taxon>
        <taxon>Desulfovibrionaceae</taxon>
        <taxon>Nitratidesulfovibrio</taxon>
    </lineage>
</organism>
<dbReference type="EMBL" id="AE017285">
    <property type="protein sequence ID" value="AAS96052.1"/>
    <property type="molecule type" value="Genomic_DNA"/>
</dbReference>
<dbReference type="RefSeq" id="WP_010938865.1">
    <property type="nucleotide sequence ID" value="NC_002937.3"/>
</dbReference>
<dbReference type="RefSeq" id="YP_010793.1">
    <property type="nucleotide sequence ID" value="NC_002937.3"/>
</dbReference>
<dbReference type="SMR" id="Q72BR0"/>
<dbReference type="STRING" id="882.DVU_1574"/>
<dbReference type="PaxDb" id="882-DVU_1574"/>
<dbReference type="EnsemblBacteria" id="AAS96052">
    <property type="protein sequence ID" value="AAS96052"/>
    <property type="gene ID" value="DVU_1574"/>
</dbReference>
<dbReference type="KEGG" id="dvu:DVU_1574"/>
<dbReference type="PATRIC" id="fig|882.5.peg.1449"/>
<dbReference type="eggNOG" id="COG1825">
    <property type="taxonomic scope" value="Bacteria"/>
</dbReference>
<dbReference type="HOGENOM" id="CLU_075939_2_1_7"/>
<dbReference type="OrthoDB" id="9786489at2"/>
<dbReference type="PhylomeDB" id="Q72BR0"/>
<dbReference type="Proteomes" id="UP000002194">
    <property type="component" value="Chromosome"/>
</dbReference>
<dbReference type="GO" id="GO:0022625">
    <property type="term" value="C:cytosolic large ribosomal subunit"/>
    <property type="evidence" value="ECO:0007669"/>
    <property type="project" value="TreeGrafter"/>
</dbReference>
<dbReference type="GO" id="GO:0008097">
    <property type="term" value="F:5S rRNA binding"/>
    <property type="evidence" value="ECO:0007669"/>
    <property type="project" value="InterPro"/>
</dbReference>
<dbReference type="GO" id="GO:0003735">
    <property type="term" value="F:structural constituent of ribosome"/>
    <property type="evidence" value="ECO:0007669"/>
    <property type="project" value="InterPro"/>
</dbReference>
<dbReference type="GO" id="GO:0006412">
    <property type="term" value="P:translation"/>
    <property type="evidence" value="ECO:0007669"/>
    <property type="project" value="UniProtKB-UniRule"/>
</dbReference>
<dbReference type="CDD" id="cd00495">
    <property type="entry name" value="Ribosomal_L25_TL5_CTC"/>
    <property type="match status" value="1"/>
</dbReference>
<dbReference type="Gene3D" id="2.170.120.20">
    <property type="entry name" value="Ribosomal protein L25, beta domain"/>
    <property type="match status" value="1"/>
</dbReference>
<dbReference type="Gene3D" id="2.40.240.10">
    <property type="entry name" value="Ribosomal Protein L25, Chain P"/>
    <property type="match status" value="1"/>
</dbReference>
<dbReference type="HAMAP" id="MF_01334">
    <property type="entry name" value="Ribosomal_bL25_CTC"/>
    <property type="match status" value="1"/>
</dbReference>
<dbReference type="InterPro" id="IPR020056">
    <property type="entry name" value="Rbsml_bL25/Gln-tRNA_synth_N"/>
</dbReference>
<dbReference type="InterPro" id="IPR011035">
    <property type="entry name" value="Ribosomal_bL25/Gln-tRNA_synth"/>
</dbReference>
<dbReference type="InterPro" id="IPR020057">
    <property type="entry name" value="Ribosomal_bL25_b-dom"/>
</dbReference>
<dbReference type="InterPro" id="IPR037121">
    <property type="entry name" value="Ribosomal_bL25_C"/>
</dbReference>
<dbReference type="InterPro" id="IPR001021">
    <property type="entry name" value="Ribosomal_bL25_long"/>
</dbReference>
<dbReference type="InterPro" id="IPR029751">
    <property type="entry name" value="Ribosomal_L25_dom"/>
</dbReference>
<dbReference type="InterPro" id="IPR020930">
    <property type="entry name" value="Ribosomal_uL5_bac-type"/>
</dbReference>
<dbReference type="NCBIfam" id="TIGR00731">
    <property type="entry name" value="bL25_bact_ctc"/>
    <property type="match status" value="1"/>
</dbReference>
<dbReference type="NCBIfam" id="NF004135">
    <property type="entry name" value="PRK05618.3-1"/>
    <property type="match status" value="1"/>
</dbReference>
<dbReference type="PANTHER" id="PTHR33284">
    <property type="entry name" value="RIBOSOMAL PROTEIN L25/GLN-TRNA SYNTHETASE, ANTI-CODON-BINDING DOMAIN-CONTAINING PROTEIN"/>
    <property type="match status" value="1"/>
</dbReference>
<dbReference type="PANTHER" id="PTHR33284:SF1">
    <property type="entry name" value="RIBOSOMAL PROTEIN L25_GLN-TRNA SYNTHETASE, ANTI-CODON-BINDING DOMAIN-CONTAINING PROTEIN"/>
    <property type="match status" value="1"/>
</dbReference>
<dbReference type="Pfam" id="PF01386">
    <property type="entry name" value="Ribosomal_L25p"/>
    <property type="match status" value="1"/>
</dbReference>
<dbReference type="Pfam" id="PF14693">
    <property type="entry name" value="Ribosomal_TL5_C"/>
    <property type="match status" value="1"/>
</dbReference>
<dbReference type="SUPFAM" id="SSF50715">
    <property type="entry name" value="Ribosomal protein L25-like"/>
    <property type="match status" value="1"/>
</dbReference>
<comment type="function">
    <text evidence="1">This is one of the proteins that binds to the 5S RNA in the ribosome where it forms part of the central protuberance.</text>
</comment>
<comment type="subunit">
    <text evidence="1">Part of the 50S ribosomal subunit; part of the 5S rRNA/L5/L18/L25 subcomplex. Contacts the 5S rRNA. Binds to the 5S rRNA independently of L5 and L18.</text>
</comment>
<comment type="similarity">
    <text evidence="1">Belongs to the bacterial ribosomal protein bL25 family. CTC subfamily.</text>
</comment>
<feature type="chain" id="PRO_0000181545" description="Large ribosomal subunit protein bL25">
    <location>
        <begin position="1"/>
        <end position="190"/>
    </location>
</feature>
<feature type="region of interest" description="Disordered" evidence="2">
    <location>
        <begin position="1"/>
        <end position="20"/>
    </location>
</feature>
<sequence>MSEQKTLSVQKRDNLGKGANRRLRSEEVVPGVFYDTKGNNVAVQMPAKPLQKLFEEVGRTTVFQLEIEEEGKKSTHPVLIWDALFHPYKKKFTHIDFFGVDLDREIKIRVPLEFVGTSRGVKLGGKLEVYREFIDVMSKPLTLPKKITLDLTELDINSTIMLKDVAMPEGVRPATNENFAILSVLTPKSE</sequence>